<reference key="1">
    <citation type="journal article" date="2010" name="PLoS ONE">
        <title>Genome sequence of Cronobacter sakazakii BAA-894 and comparative genomic hybridization analysis with other Cronobacter species.</title>
        <authorList>
            <person name="Kucerova E."/>
            <person name="Clifton S.W."/>
            <person name="Xia X.Q."/>
            <person name="Long F."/>
            <person name="Porwollik S."/>
            <person name="Fulton L."/>
            <person name="Fronick C."/>
            <person name="Minx P."/>
            <person name="Kyung K."/>
            <person name="Warren W."/>
            <person name="Fulton R."/>
            <person name="Feng D."/>
            <person name="Wollam A."/>
            <person name="Shah N."/>
            <person name="Bhonagiri V."/>
            <person name="Nash W.E."/>
            <person name="Hallsworth-Pepin K."/>
            <person name="Wilson R.K."/>
            <person name="McClelland M."/>
            <person name="Forsythe S.J."/>
        </authorList>
    </citation>
    <scope>NUCLEOTIDE SEQUENCE [LARGE SCALE GENOMIC DNA]</scope>
    <source>
        <strain>ATCC BAA-894</strain>
    </source>
</reference>
<feature type="chain" id="PRO_1000044928" description="Pole-localizer protein TmaR">
    <location>
        <begin position="1"/>
        <end position="112"/>
    </location>
</feature>
<feature type="coiled-coil region" evidence="1">
    <location>
        <begin position="14"/>
        <end position="41"/>
    </location>
</feature>
<name>TMAR_CROS8</name>
<protein>
    <recommendedName>
        <fullName evidence="1">Pole-localizer protein TmaR</fullName>
    </recommendedName>
</protein>
<evidence type="ECO:0000255" key="1">
    <source>
        <dbReference type="HAMAP-Rule" id="MF_00683"/>
    </source>
</evidence>
<accession>A7MJN1</accession>
<keyword id="KW-0175">Coiled coil</keyword>
<keyword id="KW-0963">Cytoplasm</keyword>
<keyword id="KW-1185">Reference proteome</keyword>
<gene>
    <name evidence="1" type="primary">tmaR</name>
    <name type="ordered locus">ESA_01212</name>
</gene>
<comment type="function">
    <text evidence="1">Pole-localizer protein involved in the regulation of several cellular processes.</text>
</comment>
<comment type="subcellular location">
    <subcellularLocation>
        <location evidence="1">Cytoplasm</location>
    </subcellularLocation>
</comment>
<comment type="similarity">
    <text evidence="1">Belongs to the pole-localizer TmaR family.</text>
</comment>
<sequence length="112" mass="13209">MENSKPSFQDVLEFVRLFRRKNKLQREIQDVEKKIRDNQKRVLLLDNLSDYIKPGMSVEAIQGIIASMKSDYEDRVDDYIIKNAEISKERREISKKLKAMGELKVHEPKGEE</sequence>
<proteinExistence type="inferred from homology"/>
<dbReference type="EMBL" id="CP000783">
    <property type="protein sequence ID" value="ABU76479.1"/>
    <property type="molecule type" value="Genomic_DNA"/>
</dbReference>
<dbReference type="RefSeq" id="WP_004385327.1">
    <property type="nucleotide sequence ID" value="NC_009778.1"/>
</dbReference>
<dbReference type="SMR" id="A7MJN1"/>
<dbReference type="KEGG" id="esa:ESA_01212"/>
<dbReference type="HOGENOM" id="CLU_153146_0_0_6"/>
<dbReference type="Proteomes" id="UP000000260">
    <property type="component" value="Chromosome"/>
</dbReference>
<dbReference type="GO" id="GO:0005829">
    <property type="term" value="C:cytosol"/>
    <property type="evidence" value="ECO:0007669"/>
    <property type="project" value="TreeGrafter"/>
</dbReference>
<dbReference type="HAMAP" id="MF_00683">
    <property type="entry name" value="Pole_loc_TmaR"/>
    <property type="match status" value="1"/>
</dbReference>
<dbReference type="InterPro" id="IPR007458">
    <property type="entry name" value="DUF496"/>
</dbReference>
<dbReference type="InterPro" id="IPR053375">
    <property type="entry name" value="UPF0265"/>
</dbReference>
<dbReference type="NCBIfam" id="NF003844">
    <property type="entry name" value="PRK05423.1"/>
    <property type="match status" value="1"/>
</dbReference>
<dbReference type="NCBIfam" id="NF040881">
    <property type="entry name" value="PTS_reg_TmaR"/>
    <property type="match status" value="1"/>
</dbReference>
<dbReference type="PANTHER" id="PTHR39591">
    <property type="entry name" value="UPF0265 PROTEIN YEEX"/>
    <property type="match status" value="1"/>
</dbReference>
<dbReference type="PANTHER" id="PTHR39591:SF1">
    <property type="entry name" value="UPF0265 PROTEIN YEEX"/>
    <property type="match status" value="1"/>
</dbReference>
<dbReference type="Pfam" id="PF04363">
    <property type="entry name" value="DUF496"/>
    <property type="match status" value="1"/>
</dbReference>
<dbReference type="PIRSF" id="PIRSF028773">
    <property type="entry name" value="UCP028773"/>
    <property type="match status" value="1"/>
</dbReference>
<organism>
    <name type="scientific">Cronobacter sakazakii (strain ATCC BAA-894)</name>
    <name type="common">Enterobacter sakazakii</name>
    <dbReference type="NCBI Taxonomy" id="290339"/>
    <lineage>
        <taxon>Bacteria</taxon>
        <taxon>Pseudomonadati</taxon>
        <taxon>Pseudomonadota</taxon>
        <taxon>Gammaproteobacteria</taxon>
        <taxon>Enterobacterales</taxon>
        <taxon>Enterobacteriaceae</taxon>
        <taxon>Cronobacter</taxon>
    </lineage>
</organism>